<keyword id="KW-0653">Protein transport</keyword>
<keyword id="KW-0694">RNA-binding</keyword>
<keyword id="KW-0813">Transport</keyword>
<proteinExistence type="inferred from homology"/>
<feature type="chain" id="PRO_0000135614" description="Nascent polypeptide-associated complex protein">
    <location>
        <begin position="1"/>
        <end position="119"/>
    </location>
</feature>
<feature type="domain" description="NAC-A/B" evidence="1">
    <location>
        <begin position="5"/>
        <end position="73"/>
    </location>
</feature>
<comment type="function">
    <text evidence="1">Contacts the emerging nascent chain on the ribosome.</text>
</comment>
<comment type="subunit">
    <text evidence="1">Homodimer. Interacts with the ribosome. Binds ribosomal RNA.</text>
</comment>
<comment type="similarity">
    <text evidence="1">Belongs to the NAC-alpha family.</text>
</comment>
<sequence length="119" mass="13390">MIPGRMNSREMRRLMAQMGIKSTEMDDVKKVIFVGKEKDYVIENAQVTMIEAQGVKTFQVVGDFRETPKKQEGKKEETFPEDDIKLVMDQTGVAREKAIEALKAASGEPAQAILNLTQK</sequence>
<evidence type="ECO:0000255" key="1">
    <source>
        <dbReference type="HAMAP-Rule" id="MF_00814"/>
    </source>
</evidence>
<reference key="1">
    <citation type="journal article" date="2000" name="Proc. Natl. Acad. Sci. U.S.A.">
        <title>Archaeal adaptation to higher temperatures revealed by genomic sequence of Thermoplasma volcanium.</title>
        <authorList>
            <person name="Kawashima T."/>
            <person name="Amano N."/>
            <person name="Koike H."/>
            <person name="Makino S."/>
            <person name="Higuchi S."/>
            <person name="Kawashima-Ohya Y."/>
            <person name="Watanabe K."/>
            <person name="Yamazaki M."/>
            <person name="Kanehori K."/>
            <person name="Kawamoto T."/>
            <person name="Nunoshiba T."/>
            <person name="Yamamoto Y."/>
            <person name="Aramaki H."/>
            <person name="Makino K."/>
            <person name="Suzuki M."/>
        </authorList>
    </citation>
    <scope>NUCLEOTIDE SEQUENCE [LARGE SCALE GENOMIC DNA]</scope>
    <source>
        <strain>ATCC 51530 / DSM 4299 / JCM 9571 / NBRC 15438 / GSS1</strain>
    </source>
</reference>
<protein>
    <recommendedName>
        <fullName evidence="1">Nascent polypeptide-associated complex protein</fullName>
    </recommendedName>
</protein>
<gene>
    <name evidence="1" type="primary">nac</name>
    <name type="ordered locus">TV0118</name>
    <name type="ORF">TVG0126024</name>
</gene>
<dbReference type="EMBL" id="BA000011">
    <property type="protein sequence ID" value="BAB59260.1"/>
    <property type="molecule type" value="Genomic_DNA"/>
</dbReference>
<dbReference type="RefSeq" id="WP_010916374.1">
    <property type="nucleotide sequence ID" value="NC_002689.2"/>
</dbReference>
<dbReference type="SMR" id="Q97CI3"/>
<dbReference type="STRING" id="273116.gene:9380886"/>
<dbReference type="PaxDb" id="273116-14324332"/>
<dbReference type="GeneID" id="1441604"/>
<dbReference type="KEGG" id="tvo:TVG0126024"/>
<dbReference type="eggNOG" id="arCOG04061">
    <property type="taxonomic scope" value="Archaea"/>
</dbReference>
<dbReference type="HOGENOM" id="CLU_146475_1_0_2"/>
<dbReference type="OrthoDB" id="53273at2157"/>
<dbReference type="PhylomeDB" id="Q97CI3"/>
<dbReference type="Proteomes" id="UP000001017">
    <property type="component" value="Chromosome"/>
</dbReference>
<dbReference type="GO" id="GO:0003723">
    <property type="term" value="F:RNA binding"/>
    <property type="evidence" value="ECO:0007669"/>
    <property type="project" value="UniProtKB-UniRule"/>
</dbReference>
<dbReference type="GO" id="GO:0015031">
    <property type="term" value="P:protein transport"/>
    <property type="evidence" value="ECO:0007669"/>
    <property type="project" value="UniProtKB-UniRule"/>
</dbReference>
<dbReference type="CDD" id="cd14359">
    <property type="entry name" value="UBA_AeNAC"/>
    <property type="match status" value="1"/>
</dbReference>
<dbReference type="Gene3D" id="1.10.8.10">
    <property type="entry name" value="DNA helicase RuvA subunit, C-terminal domain"/>
    <property type="match status" value="1"/>
</dbReference>
<dbReference type="Gene3D" id="2.20.70.30">
    <property type="entry name" value="Nascent polypeptide-associated complex domain"/>
    <property type="match status" value="1"/>
</dbReference>
<dbReference type="HAMAP" id="MF_00814">
    <property type="entry name" value="NAC_arch"/>
    <property type="match status" value="1"/>
</dbReference>
<dbReference type="InterPro" id="IPR038187">
    <property type="entry name" value="NAC_A/B_dom_sf"/>
</dbReference>
<dbReference type="InterPro" id="IPR005231">
    <property type="entry name" value="NAC_arc"/>
</dbReference>
<dbReference type="InterPro" id="IPR002715">
    <property type="entry name" value="Nas_poly-pep-assoc_cplx_dom"/>
</dbReference>
<dbReference type="InterPro" id="IPR009060">
    <property type="entry name" value="UBA-like_sf"/>
</dbReference>
<dbReference type="NCBIfam" id="TIGR00264">
    <property type="entry name" value="archaeal-type nascent polypeptide-associated complex protein"/>
    <property type="match status" value="1"/>
</dbReference>
<dbReference type="Pfam" id="PF01849">
    <property type="entry name" value="NAC"/>
    <property type="match status" value="1"/>
</dbReference>
<dbReference type="SMART" id="SM01407">
    <property type="entry name" value="NAC"/>
    <property type="match status" value="1"/>
</dbReference>
<dbReference type="SUPFAM" id="SSF46934">
    <property type="entry name" value="UBA-like"/>
    <property type="match status" value="1"/>
</dbReference>
<dbReference type="PROSITE" id="PS51151">
    <property type="entry name" value="NAC_AB"/>
    <property type="match status" value="1"/>
</dbReference>
<organism>
    <name type="scientific">Thermoplasma volcanium (strain ATCC 51530 / DSM 4299 / JCM 9571 / NBRC 15438 / GSS1)</name>
    <dbReference type="NCBI Taxonomy" id="273116"/>
    <lineage>
        <taxon>Archaea</taxon>
        <taxon>Methanobacteriati</taxon>
        <taxon>Thermoplasmatota</taxon>
        <taxon>Thermoplasmata</taxon>
        <taxon>Thermoplasmatales</taxon>
        <taxon>Thermoplasmataceae</taxon>
        <taxon>Thermoplasma</taxon>
    </lineage>
</organism>
<name>NAC_THEVO</name>
<accession>Q97CI3</accession>